<evidence type="ECO:0000255" key="1">
    <source>
        <dbReference type="HAMAP-Rule" id="MF_01507"/>
    </source>
</evidence>
<protein>
    <recommendedName>
        <fullName evidence="1">UPF0297 protein Bcer98_3100</fullName>
    </recommendedName>
</protein>
<gene>
    <name type="ordered locus">Bcer98_3100</name>
</gene>
<accession>A7GT66</accession>
<comment type="similarity">
    <text evidence="1">Belongs to the UPF0297 family.</text>
</comment>
<dbReference type="EMBL" id="CP000764">
    <property type="protein sequence ID" value="ABS23324.1"/>
    <property type="molecule type" value="Genomic_DNA"/>
</dbReference>
<dbReference type="RefSeq" id="WP_012095561.1">
    <property type="nucleotide sequence ID" value="NC_009674.1"/>
</dbReference>
<dbReference type="SMR" id="A7GT66"/>
<dbReference type="STRING" id="315749.Bcer98_3100"/>
<dbReference type="GeneID" id="33898347"/>
<dbReference type="KEGG" id="bcy:Bcer98_3100"/>
<dbReference type="eggNOG" id="COG4472">
    <property type="taxonomic scope" value="Bacteria"/>
</dbReference>
<dbReference type="HOGENOM" id="CLU_162466_0_0_9"/>
<dbReference type="OrthoDB" id="9796303at2"/>
<dbReference type="Proteomes" id="UP000002300">
    <property type="component" value="Chromosome"/>
</dbReference>
<dbReference type="HAMAP" id="MF_01507">
    <property type="entry name" value="UPF0297"/>
    <property type="match status" value="1"/>
</dbReference>
<dbReference type="InterPro" id="IPR009309">
    <property type="entry name" value="IreB"/>
</dbReference>
<dbReference type="NCBIfam" id="NF003997">
    <property type="entry name" value="PRK05473.1"/>
    <property type="match status" value="1"/>
</dbReference>
<dbReference type="PANTHER" id="PTHR40067">
    <property type="entry name" value="UPF0297 PROTEIN YRZL"/>
    <property type="match status" value="1"/>
</dbReference>
<dbReference type="PANTHER" id="PTHR40067:SF1">
    <property type="entry name" value="UPF0297 PROTEIN YRZL"/>
    <property type="match status" value="1"/>
</dbReference>
<dbReference type="Pfam" id="PF06135">
    <property type="entry name" value="IreB"/>
    <property type="match status" value="1"/>
</dbReference>
<dbReference type="PIRSF" id="PIRSF037258">
    <property type="entry name" value="DUF965_bac"/>
    <property type="match status" value="1"/>
</dbReference>
<feature type="chain" id="PRO_1000087517" description="UPF0297 protein Bcer98_3100">
    <location>
        <begin position="1"/>
        <end position="88"/>
    </location>
</feature>
<sequence>MDGFDKTMKFSIQDEKQSVHVNDVLLTVYDALQEKGYNPINQIVGYLLSGDPAYIPRHKDARNIIRKLERDELIEELVKSYLKQHREE</sequence>
<name>Y3100_BACCN</name>
<organism>
    <name type="scientific">Bacillus cytotoxicus (strain DSM 22905 / CIP 110041 / 391-98 / NVH 391-98)</name>
    <dbReference type="NCBI Taxonomy" id="315749"/>
    <lineage>
        <taxon>Bacteria</taxon>
        <taxon>Bacillati</taxon>
        <taxon>Bacillota</taxon>
        <taxon>Bacilli</taxon>
        <taxon>Bacillales</taxon>
        <taxon>Bacillaceae</taxon>
        <taxon>Bacillus</taxon>
        <taxon>Bacillus cereus group</taxon>
    </lineage>
</organism>
<reference key="1">
    <citation type="journal article" date="2008" name="Chem. Biol. Interact.">
        <title>Extending the Bacillus cereus group genomics to putative food-borne pathogens of different toxicity.</title>
        <authorList>
            <person name="Lapidus A."/>
            <person name="Goltsman E."/>
            <person name="Auger S."/>
            <person name="Galleron N."/>
            <person name="Segurens B."/>
            <person name="Dossat C."/>
            <person name="Land M.L."/>
            <person name="Broussolle V."/>
            <person name="Brillard J."/>
            <person name="Guinebretiere M.-H."/>
            <person name="Sanchis V."/>
            <person name="Nguen-the C."/>
            <person name="Lereclus D."/>
            <person name="Richardson P."/>
            <person name="Wincker P."/>
            <person name="Weissenbach J."/>
            <person name="Ehrlich S.D."/>
            <person name="Sorokin A."/>
        </authorList>
    </citation>
    <scope>NUCLEOTIDE SEQUENCE [LARGE SCALE GENOMIC DNA]</scope>
    <source>
        <strain>DSM 22905 / CIP 110041 / 391-98 / NVH 391-98</strain>
    </source>
</reference>
<proteinExistence type="inferred from homology"/>